<sequence length="488" mass="52357">MTFNHKTIEELHDLLVKKEISAVELTQATLADIKEREGAVDSFITVSEEEALAKAAALDAKGIDADNLMSGIPLAVKDNISTKGILTTAASKMLYNYKPIFDATSVEKLYGKDMIIVGKTNMDEFAMGGSSENSYFKTTKNAWDGSKVPGGSSGGSATAVASGQVRLSLGSDTGGSIRQPASFNGVVGLKPTYGRVSRFGLIAFGSSLDQIGPFSQTVKENAQLLNVISGNDPKDSTSSQEAVPDFTNKIGQDIKGMKIALPKEYMGEGIDSKVKETILAAAKHLESLGAIVEEVSLPHSKYGVAVYYIIASSEASSNLQRFDGIRYGYRAEDIENLEDVYVKSRSEGFGEEVKRRIMLGTFSLSSGYYDAYFKKAGQVRTLIMQDFAKVFEKYDLILGPTAPTVAYDLGSQNQDPVAMYLADLLTIPVNLAGLPGISIPAGFADGLPVGLQLIGNHFDEATIYQAAAAFEATTDYHKQQPVIFGGEK</sequence>
<proteinExistence type="inferred from homology"/>
<keyword id="KW-0067">ATP-binding</keyword>
<keyword id="KW-0436">Ligase</keyword>
<keyword id="KW-0547">Nucleotide-binding</keyword>
<keyword id="KW-0648">Protein biosynthesis</keyword>
<keyword id="KW-1185">Reference proteome</keyword>
<protein>
    <recommendedName>
        <fullName evidence="1">Glutamyl-tRNA(Gln) amidotransferase subunit A</fullName>
        <shortName evidence="1">Glu-ADT subunit A</shortName>
        <ecNumber evidence="1">6.3.5.7</ecNumber>
    </recommendedName>
</protein>
<evidence type="ECO:0000255" key="1">
    <source>
        <dbReference type="HAMAP-Rule" id="MF_00120"/>
    </source>
</evidence>
<dbReference type="EC" id="6.3.5.7" evidence="1"/>
<dbReference type="EMBL" id="CP000725">
    <property type="protein sequence ID" value="ABV09369.1"/>
    <property type="molecule type" value="Genomic_DNA"/>
</dbReference>
<dbReference type="RefSeq" id="WP_011999945.1">
    <property type="nucleotide sequence ID" value="NC_009785.1"/>
</dbReference>
<dbReference type="SMR" id="A8AVE2"/>
<dbReference type="STRING" id="467705.SGO_0436"/>
<dbReference type="KEGG" id="sgo:SGO_0436"/>
<dbReference type="eggNOG" id="COG0154">
    <property type="taxonomic scope" value="Bacteria"/>
</dbReference>
<dbReference type="HOGENOM" id="CLU_009600_0_3_9"/>
<dbReference type="Proteomes" id="UP000001131">
    <property type="component" value="Chromosome"/>
</dbReference>
<dbReference type="GO" id="GO:0030956">
    <property type="term" value="C:glutamyl-tRNA(Gln) amidotransferase complex"/>
    <property type="evidence" value="ECO:0007669"/>
    <property type="project" value="InterPro"/>
</dbReference>
<dbReference type="GO" id="GO:0005524">
    <property type="term" value="F:ATP binding"/>
    <property type="evidence" value="ECO:0007669"/>
    <property type="project" value="UniProtKB-KW"/>
</dbReference>
<dbReference type="GO" id="GO:0050567">
    <property type="term" value="F:glutaminyl-tRNA synthase (glutamine-hydrolyzing) activity"/>
    <property type="evidence" value="ECO:0007669"/>
    <property type="project" value="UniProtKB-UniRule"/>
</dbReference>
<dbReference type="GO" id="GO:0006412">
    <property type="term" value="P:translation"/>
    <property type="evidence" value="ECO:0007669"/>
    <property type="project" value="UniProtKB-UniRule"/>
</dbReference>
<dbReference type="Gene3D" id="3.90.1300.10">
    <property type="entry name" value="Amidase signature (AS) domain"/>
    <property type="match status" value="1"/>
</dbReference>
<dbReference type="HAMAP" id="MF_00120">
    <property type="entry name" value="GatA"/>
    <property type="match status" value="1"/>
</dbReference>
<dbReference type="InterPro" id="IPR000120">
    <property type="entry name" value="Amidase"/>
</dbReference>
<dbReference type="InterPro" id="IPR020556">
    <property type="entry name" value="Amidase_CS"/>
</dbReference>
<dbReference type="InterPro" id="IPR023631">
    <property type="entry name" value="Amidase_dom"/>
</dbReference>
<dbReference type="InterPro" id="IPR036928">
    <property type="entry name" value="AS_sf"/>
</dbReference>
<dbReference type="InterPro" id="IPR004412">
    <property type="entry name" value="GatA"/>
</dbReference>
<dbReference type="NCBIfam" id="TIGR00132">
    <property type="entry name" value="gatA"/>
    <property type="match status" value="1"/>
</dbReference>
<dbReference type="PANTHER" id="PTHR11895:SF151">
    <property type="entry name" value="GLUTAMYL-TRNA(GLN) AMIDOTRANSFERASE SUBUNIT A"/>
    <property type="match status" value="1"/>
</dbReference>
<dbReference type="PANTHER" id="PTHR11895">
    <property type="entry name" value="TRANSAMIDASE"/>
    <property type="match status" value="1"/>
</dbReference>
<dbReference type="Pfam" id="PF01425">
    <property type="entry name" value="Amidase"/>
    <property type="match status" value="1"/>
</dbReference>
<dbReference type="SUPFAM" id="SSF75304">
    <property type="entry name" value="Amidase signature (AS) enzymes"/>
    <property type="match status" value="1"/>
</dbReference>
<dbReference type="PROSITE" id="PS00571">
    <property type="entry name" value="AMIDASES"/>
    <property type="match status" value="1"/>
</dbReference>
<organism>
    <name type="scientific">Streptococcus gordonii (strain Challis / ATCC 35105 / BCRC 15272 / CH1 / DL1 / V288)</name>
    <dbReference type="NCBI Taxonomy" id="467705"/>
    <lineage>
        <taxon>Bacteria</taxon>
        <taxon>Bacillati</taxon>
        <taxon>Bacillota</taxon>
        <taxon>Bacilli</taxon>
        <taxon>Lactobacillales</taxon>
        <taxon>Streptococcaceae</taxon>
        <taxon>Streptococcus</taxon>
    </lineage>
</organism>
<feature type="chain" id="PRO_1000076146" description="Glutamyl-tRNA(Gln) amidotransferase subunit A">
    <location>
        <begin position="1"/>
        <end position="488"/>
    </location>
</feature>
<feature type="active site" description="Charge relay system" evidence="1">
    <location>
        <position position="77"/>
    </location>
</feature>
<feature type="active site" description="Charge relay system" evidence="1">
    <location>
        <position position="152"/>
    </location>
</feature>
<feature type="active site" description="Acyl-ester intermediate" evidence="1">
    <location>
        <position position="176"/>
    </location>
</feature>
<reference key="1">
    <citation type="journal article" date="2007" name="J. Bacteriol.">
        <title>Genome-wide transcriptional changes in Streptococcus gordonii in response to competence signaling peptide.</title>
        <authorList>
            <person name="Vickerman M.M."/>
            <person name="Iobst S."/>
            <person name="Jesionowski A.M."/>
            <person name="Gill S.R."/>
        </authorList>
    </citation>
    <scope>NUCLEOTIDE SEQUENCE [LARGE SCALE GENOMIC DNA]</scope>
    <source>
        <strain>Challis / ATCC 35105 / BCRC 15272 / CH1 / DL1 / V288</strain>
    </source>
</reference>
<comment type="function">
    <text evidence="1">Allows the formation of correctly charged Gln-tRNA(Gln) through the transamidation of misacylated Glu-tRNA(Gln) in organisms which lack glutaminyl-tRNA synthetase. The reaction takes place in the presence of glutamine and ATP through an activated gamma-phospho-Glu-tRNA(Gln).</text>
</comment>
<comment type="catalytic activity">
    <reaction evidence="1">
        <text>L-glutamyl-tRNA(Gln) + L-glutamine + ATP + H2O = L-glutaminyl-tRNA(Gln) + L-glutamate + ADP + phosphate + H(+)</text>
        <dbReference type="Rhea" id="RHEA:17521"/>
        <dbReference type="Rhea" id="RHEA-COMP:9681"/>
        <dbReference type="Rhea" id="RHEA-COMP:9684"/>
        <dbReference type="ChEBI" id="CHEBI:15377"/>
        <dbReference type="ChEBI" id="CHEBI:15378"/>
        <dbReference type="ChEBI" id="CHEBI:29985"/>
        <dbReference type="ChEBI" id="CHEBI:30616"/>
        <dbReference type="ChEBI" id="CHEBI:43474"/>
        <dbReference type="ChEBI" id="CHEBI:58359"/>
        <dbReference type="ChEBI" id="CHEBI:78520"/>
        <dbReference type="ChEBI" id="CHEBI:78521"/>
        <dbReference type="ChEBI" id="CHEBI:456216"/>
        <dbReference type="EC" id="6.3.5.7"/>
    </reaction>
</comment>
<comment type="subunit">
    <text evidence="1">Heterotrimer of A, B and C subunits.</text>
</comment>
<comment type="similarity">
    <text evidence="1">Belongs to the amidase family. GatA subfamily.</text>
</comment>
<name>GATA_STRGC</name>
<accession>A8AVE2</accession>
<gene>
    <name evidence="1" type="primary">gatA</name>
    <name type="ordered locus">SGO_0436</name>
</gene>